<proteinExistence type="inferred from homology"/>
<name>PSAI_EMIHU</name>
<protein>
    <recommendedName>
        <fullName evidence="1">Photosystem I reaction center subunit VIII</fullName>
        <shortName evidence="1">PSI-I</shortName>
    </recommendedName>
</protein>
<organism>
    <name type="scientific">Emiliania huxleyi</name>
    <name type="common">Coccolithophore</name>
    <name type="synonym">Pontosphaera huxleyi</name>
    <dbReference type="NCBI Taxonomy" id="2903"/>
    <lineage>
        <taxon>Eukaryota</taxon>
        <taxon>Haptista</taxon>
        <taxon>Haptophyta</taxon>
        <taxon>Prymnesiophyceae</taxon>
        <taxon>Isochrysidales</taxon>
        <taxon>Noelaerhabdaceae</taxon>
        <taxon>Emiliania</taxon>
    </lineage>
</organism>
<accession>Q4G373</accession>
<gene>
    <name evidence="1" type="primary">psaI</name>
</gene>
<reference key="1">
    <citation type="journal article" date="2005" name="DNA Res.">
        <title>The complete plastid genome sequence of the haptophyte Emiliania huxleyi: a comparison to other plastid genomes.</title>
        <authorList>
            <person name="Sanchez-Puerta M.V."/>
            <person name="Bachvaroff T.R."/>
            <person name="Delwiche C.F."/>
        </authorList>
    </citation>
    <scope>NUCLEOTIDE SEQUENCE [LARGE SCALE GENOMIC DNA]</scope>
    <source>
        <strain>CCMP373 / CSIRO-CS-57 / BT6</strain>
    </source>
</reference>
<geneLocation type="chloroplast"/>
<dbReference type="EMBL" id="AY741371">
    <property type="protein sequence ID" value="AAX13893.1"/>
    <property type="molecule type" value="Genomic_DNA"/>
</dbReference>
<dbReference type="RefSeq" id="YP_277394.1">
    <property type="nucleotide sequence ID" value="NC_007288.1"/>
</dbReference>
<dbReference type="SMR" id="Q4G373"/>
<dbReference type="STRING" id="2903.Q4G373"/>
<dbReference type="GeneID" id="3562479"/>
<dbReference type="GO" id="GO:0009535">
    <property type="term" value="C:chloroplast thylakoid membrane"/>
    <property type="evidence" value="ECO:0007669"/>
    <property type="project" value="UniProtKB-SubCell"/>
</dbReference>
<dbReference type="GO" id="GO:0009522">
    <property type="term" value="C:photosystem I"/>
    <property type="evidence" value="ECO:0007669"/>
    <property type="project" value="UniProtKB-KW"/>
</dbReference>
<dbReference type="GO" id="GO:0015979">
    <property type="term" value="P:photosynthesis"/>
    <property type="evidence" value="ECO:0007669"/>
    <property type="project" value="UniProtKB-UniRule"/>
</dbReference>
<dbReference type="HAMAP" id="MF_00431">
    <property type="entry name" value="PSI_PsaI"/>
    <property type="match status" value="1"/>
</dbReference>
<dbReference type="InterPro" id="IPR001302">
    <property type="entry name" value="PSI_PsaI"/>
</dbReference>
<dbReference type="InterPro" id="IPR036357">
    <property type="entry name" value="PSI_PsaI_sf"/>
</dbReference>
<dbReference type="NCBIfam" id="TIGR03052">
    <property type="entry name" value="PS_I_psaI"/>
    <property type="match status" value="1"/>
</dbReference>
<dbReference type="SUPFAM" id="SSF81540">
    <property type="entry name" value="Subunit VIII of photosystem I reaction centre, PsaI"/>
    <property type="match status" value="1"/>
</dbReference>
<evidence type="ECO:0000255" key="1">
    <source>
        <dbReference type="HAMAP-Rule" id="MF_00431"/>
    </source>
</evidence>
<keyword id="KW-0150">Chloroplast</keyword>
<keyword id="KW-0472">Membrane</keyword>
<keyword id="KW-0602">Photosynthesis</keyword>
<keyword id="KW-0603">Photosystem I</keyword>
<keyword id="KW-0934">Plastid</keyword>
<keyword id="KW-0793">Thylakoid</keyword>
<keyword id="KW-0812">Transmembrane</keyword>
<keyword id="KW-1133">Transmembrane helix</keyword>
<comment type="function">
    <text evidence="1">May help in the organization of the PsaL subunit.</text>
</comment>
<comment type="subcellular location">
    <subcellularLocation>
        <location evidence="1">Plastid</location>
        <location evidence="1">Chloroplast thylakoid membrane</location>
        <topology evidence="1">Single-pass membrane protein</topology>
    </subcellularLocation>
</comment>
<comment type="similarity">
    <text evidence="1">Belongs to the PsaI family.</text>
</comment>
<sequence>MSASFLPSILTPVVTLVFPGLMFALFFVLIEQEEIA</sequence>
<feature type="chain" id="PRO_0000276044" description="Photosystem I reaction center subunit VIII">
    <location>
        <begin position="1"/>
        <end position="36"/>
    </location>
</feature>
<feature type="transmembrane region" description="Helical" evidence="1">
    <location>
        <begin position="9"/>
        <end position="29"/>
    </location>
</feature>